<feature type="chain" id="PRO_1000066806" description="GTP 3',8-cyclase">
    <location>
        <begin position="1"/>
        <end position="320"/>
    </location>
</feature>
<feature type="domain" description="Radical SAM core" evidence="2">
    <location>
        <begin position="4"/>
        <end position="227"/>
    </location>
</feature>
<feature type="region of interest" description="Disordered" evidence="3">
    <location>
        <begin position="300"/>
        <end position="320"/>
    </location>
</feature>
<feature type="compositionally biased region" description="Basic and acidic residues" evidence="3">
    <location>
        <begin position="300"/>
        <end position="312"/>
    </location>
</feature>
<feature type="binding site" evidence="1">
    <location>
        <position position="13"/>
    </location>
    <ligand>
        <name>GTP</name>
        <dbReference type="ChEBI" id="CHEBI:37565"/>
    </ligand>
</feature>
<feature type="binding site" evidence="1">
    <location>
        <position position="20"/>
    </location>
    <ligand>
        <name>[4Fe-4S] cluster</name>
        <dbReference type="ChEBI" id="CHEBI:49883"/>
        <label>1</label>
        <note>4Fe-4S-S-AdoMet</note>
    </ligand>
</feature>
<feature type="binding site" evidence="1">
    <location>
        <position position="24"/>
    </location>
    <ligand>
        <name>[4Fe-4S] cluster</name>
        <dbReference type="ChEBI" id="CHEBI:49883"/>
        <label>1</label>
        <note>4Fe-4S-S-AdoMet</note>
    </ligand>
</feature>
<feature type="binding site" evidence="1">
    <location>
        <position position="26"/>
    </location>
    <ligand>
        <name>S-adenosyl-L-methionine</name>
        <dbReference type="ChEBI" id="CHEBI:59789"/>
    </ligand>
</feature>
<feature type="binding site" evidence="1">
    <location>
        <position position="27"/>
    </location>
    <ligand>
        <name>[4Fe-4S] cluster</name>
        <dbReference type="ChEBI" id="CHEBI:49883"/>
        <label>1</label>
        <note>4Fe-4S-S-AdoMet</note>
    </ligand>
</feature>
<feature type="binding site" evidence="1">
    <location>
        <position position="63"/>
    </location>
    <ligand>
        <name>GTP</name>
        <dbReference type="ChEBI" id="CHEBI:37565"/>
    </ligand>
</feature>
<feature type="binding site" evidence="1">
    <location>
        <position position="67"/>
    </location>
    <ligand>
        <name>S-adenosyl-L-methionine</name>
        <dbReference type="ChEBI" id="CHEBI:59789"/>
    </ligand>
</feature>
<feature type="binding site" evidence="1">
    <location>
        <position position="94"/>
    </location>
    <ligand>
        <name>GTP</name>
        <dbReference type="ChEBI" id="CHEBI:37565"/>
    </ligand>
</feature>
<feature type="binding site" evidence="1">
    <location>
        <position position="118"/>
    </location>
    <ligand>
        <name>S-adenosyl-L-methionine</name>
        <dbReference type="ChEBI" id="CHEBI:59789"/>
    </ligand>
</feature>
<feature type="binding site" evidence="1">
    <location>
        <position position="155"/>
    </location>
    <ligand>
        <name>GTP</name>
        <dbReference type="ChEBI" id="CHEBI:37565"/>
    </ligand>
</feature>
<feature type="binding site" evidence="1">
    <location>
        <position position="189"/>
    </location>
    <ligand>
        <name>S-adenosyl-L-methionine</name>
        <dbReference type="ChEBI" id="CHEBI:59789"/>
    </ligand>
</feature>
<feature type="binding site" evidence="1">
    <location>
        <position position="249"/>
    </location>
    <ligand>
        <name>[4Fe-4S] cluster</name>
        <dbReference type="ChEBI" id="CHEBI:49883"/>
        <label>2</label>
        <note>4Fe-4S-substrate</note>
    </ligand>
</feature>
<feature type="binding site" evidence="1">
    <location>
        <position position="252"/>
    </location>
    <ligand>
        <name>[4Fe-4S] cluster</name>
        <dbReference type="ChEBI" id="CHEBI:49883"/>
        <label>2</label>
        <note>4Fe-4S-substrate</note>
    </ligand>
</feature>
<feature type="binding site" evidence="1">
    <location>
        <begin position="254"/>
        <end position="256"/>
    </location>
    <ligand>
        <name>GTP</name>
        <dbReference type="ChEBI" id="CHEBI:37565"/>
    </ligand>
</feature>
<feature type="binding site" evidence="1">
    <location>
        <position position="266"/>
    </location>
    <ligand>
        <name>[4Fe-4S] cluster</name>
        <dbReference type="ChEBI" id="CHEBI:49883"/>
        <label>2</label>
        <note>4Fe-4S-substrate</note>
    </ligand>
</feature>
<keyword id="KW-0004">4Fe-4S</keyword>
<keyword id="KW-0342">GTP-binding</keyword>
<keyword id="KW-0408">Iron</keyword>
<keyword id="KW-0411">Iron-sulfur</keyword>
<keyword id="KW-0456">Lyase</keyword>
<keyword id="KW-0479">Metal-binding</keyword>
<keyword id="KW-0501">Molybdenum cofactor biosynthesis</keyword>
<keyword id="KW-0547">Nucleotide-binding</keyword>
<keyword id="KW-1185">Reference proteome</keyword>
<keyword id="KW-0949">S-adenosyl-L-methionine</keyword>
<sequence length="320" mass="35753">MKDLYSRRINYMRISITDLCNLRCQYCMPAEGICKKDHKEVLTLEEITDIVKAGVGLGIDKVRITGGEPLVRNGIVEFIQMISNIDGIKDIAITTNGILLPRYAEALKEAGLKRVNISIDSLNPDKYREITRGGDLSKVLEGINECIRLGLTPVKLNVVAIGGYNDDEIEDFIQLTMDKPIDVRFIELMPIGEASQWGKDRFISNEEIVHRFKNLVPMETEKSSPAKYYQLPGGMGRVGLINPISSHFCGDCNRVRLTSDGKLKPCLHSNHEIDILDAVRNHPEKIQEVLASAILSKPEKHDLLTDSHEESNRGMSQIGG</sequence>
<proteinExistence type="inferred from homology"/>
<gene>
    <name evidence="1" type="primary">moaA</name>
    <name type="ordered locus">Clos_0570</name>
</gene>
<organism>
    <name type="scientific">Alkaliphilus oremlandii (strain OhILAs)</name>
    <name type="common">Clostridium oremlandii (strain OhILAs)</name>
    <dbReference type="NCBI Taxonomy" id="350688"/>
    <lineage>
        <taxon>Bacteria</taxon>
        <taxon>Bacillati</taxon>
        <taxon>Bacillota</taxon>
        <taxon>Clostridia</taxon>
        <taxon>Peptostreptococcales</taxon>
        <taxon>Natronincolaceae</taxon>
        <taxon>Alkaliphilus</taxon>
    </lineage>
</organism>
<reference key="1">
    <citation type="submission" date="2007-10" db="EMBL/GenBank/DDBJ databases">
        <title>Complete genome of Alkaliphilus oremlandii OhILAs.</title>
        <authorList>
            <person name="Copeland A."/>
            <person name="Lucas S."/>
            <person name="Lapidus A."/>
            <person name="Barry K."/>
            <person name="Detter J.C."/>
            <person name="Glavina del Rio T."/>
            <person name="Hammon N."/>
            <person name="Israni S."/>
            <person name="Dalin E."/>
            <person name="Tice H."/>
            <person name="Pitluck S."/>
            <person name="Chain P."/>
            <person name="Malfatti S."/>
            <person name="Shin M."/>
            <person name="Vergez L."/>
            <person name="Schmutz J."/>
            <person name="Larimer F."/>
            <person name="Land M."/>
            <person name="Hauser L."/>
            <person name="Kyrpides N."/>
            <person name="Mikhailova N."/>
            <person name="Stolz J.F."/>
            <person name="Dawson A."/>
            <person name="Fisher E."/>
            <person name="Crable B."/>
            <person name="Perera E."/>
            <person name="Lisak J."/>
            <person name="Ranganathan M."/>
            <person name="Basu P."/>
            <person name="Richardson P."/>
        </authorList>
    </citation>
    <scope>NUCLEOTIDE SEQUENCE [LARGE SCALE GENOMIC DNA]</scope>
    <source>
        <strain>OhILAs</strain>
    </source>
</reference>
<dbReference type="EC" id="4.1.99.22" evidence="1"/>
<dbReference type="EMBL" id="CP000853">
    <property type="protein sequence ID" value="ABW18132.1"/>
    <property type="molecule type" value="Genomic_DNA"/>
</dbReference>
<dbReference type="RefSeq" id="WP_012158446.1">
    <property type="nucleotide sequence ID" value="NC_009922.1"/>
</dbReference>
<dbReference type="SMR" id="A8MLW5"/>
<dbReference type="STRING" id="350688.Clos_0570"/>
<dbReference type="KEGG" id="aoe:Clos_0570"/>
<dbReference type="eggNOG" id="COG2896">
    <property type="taxonomic scope" value="Bacteria"/>
</dbReference>
<dbReference type="HOGENOM" id="CLU_009273_0_1_9"/>
<dbReference type="OrthoDB" id="9763993at2"/>
<dbReference type="UniPathway" id="UPA00344"/>
<dbReference type="Proteomes" id="UP000000269">
    <property type="component" value="Chromosome"/>
</dbReference>
<dbReference type="GO" id="GO:0051539">
    <property type="term" value="F:4 iron, 4 sulfur cluster binding"/>
    <property type="evidence" value="ECO:0007669"/>
    <property type="project" value="UniProtKB-UniRule"/>
</dbReference>
<dbReference type="GO" id="GO:0061799">
    <property type="term" value="F:cyclic pyranopterin monophosphate synthase activity"/>
    <property type="evidence" value="ECO:0007669"/>
    <property type="project" value="TreeGrafter"/>
</dbReference>
<dbReference type="GO" id="GO:0061798">
    <property type="term" value="F:GTP 3',8'-cyclase activity"/>
    <property type="evidence" value="ECO:0007669"/>
    <property type="project" value="UniProtKB-UniRule"/>
</dbReference>
<dbReference type="GO" id="GO:0005525">
    <property type="term" value="F:GTP binding"/>
    <property type="evidence" value="ECO:0007669"/>
    <property type="project" value="UniProtKB-UniRule"/>
</dbReference>
<dbReference type="GO" id="GO:0046872">
    <property type="term" value="F:metal ion binding"/>
    <property type="evidence" value="ECO:0007669"/>
    <property type="project" value="UniProtKB-KW"/>
</dbReference>
<dbReference type="GO" id="GO:1904047">
    <property type="term" value="F:S-adenosyl-L-methionine binding"/>
    <property type="evidence" value="ECO:0007669"/>
    <property type="project" value="UniProtKB-UniRule"/>
</dbReference>
<dbReference type="GO" id="GO:0006777">
    <property type="term" value="P:Mo-molybdopterin cofactor biosynthetic process"/>
    <property type="evidence" value="ECO:0007669"/>
    <property type="project" value="UniProtKB-UniRule"/>
</dbReference>
<dbReference type="CDD" id="cd01335">
    <property type="entry name" value="Radical_SAM"/>
    <property type="match status" value="1"/>
</dbReference>
<dbReference type="CDD" id="cd21117">
    <property type="entry name" value="Twitch_MoaA"/>
    <property type="match status" value="1"/>
</dbReference>
<dbReference type="Gene3D" id="3.20.20.70">
    <property type="entry name" value="Aldolase class I"/>
    <property type="match status" value="1"/>
</dbReference>
<dbReference type="HAMAP" id="MF_01225_B">
    <property type="entry name" value="MoaA_B"/>
    <property type="match status" value="1"/>
</dbReference>
<dbReference type="InterPro" id="IPR013785">
    <property type="entry name" value="Aldolase_TIM"/>
</dbReference>
<dbReference type="InterPro" id="IPR006638">
    <property type="entry name" value="Elp3/MiaA/NifB-like_rSAM"/>
</dbReference>
<dbReference type="InterPro" id="IPR013483">
    <property type="entry name" value="MoaA"/>
</dbReference>
<dbReference type="InterPro" id="IPR000385">
    <property type="entry name" value="MoaA_NifB_PqqE_Fe-S-bd_CS"/>
</dbReference>
<dbReference type="InterPro" id="IPR010505">
    <property type="entry name" value="MoaA_twitch"/>
</dbReference>
<dbReference type="InterPro" id="IPR050105">
    <property type="entry name" value="MoCo_biosynth_MoaA/MoaC"/>
</dbReference>
<dbReference type="InterPro" id="IPR007197">
    <property type="entry name" value="rSAM"/>
</dbReference>
<dbReference type="NCBIfam" id="TIGR02666">
    <property type="entry name" value="moaA"/>
    <property type="match status" value="1"/>
</dbReference>
<dbReference type="NCBIfam" id="NF001199">
    <property type="entry name" value="PRK00164.2-1"/>
    <property type="match status" value="1"/>
</dbReference>
<dbReference type="PANTHER" id="PTHR22960:SF0">
    <property type="entry name" value="MOLYBDENUM COFACTOR BIOSYNTHESIS PROTEIN 1"/>
    <property type="match status" value="1"/>
</dbReference>
<dbReference type="PANTHER" id="PTHR22960">
    <property type="entry name" value="MOLYBDOPTERIN COFACTOR SYNTHESIS PROTEIN A"/>
    <property type="match status" value="1"/>
</dbReference>
<dbReference type="Pfam" id="PF13353">
    <property type="entry name" value="Fer4_12"/>
    <property type="match status" value="1"/>
</dbReference>
<dbReference type="Pfam" id="PF06463">
    <property type="entry name" value="Mob_synth_C"/>
    <property type="match status" value="1"/>
</dbReference>
<dbReference type="Pfam" id="PF04055">
    <property type="entry name" value="Radical_SAM"/>
    <property type="match status" value="1"/>
</dbReference>
<dbReference type="SFLD" id="SFLDG01383">
    <property type="entry name" value="cyclic_pyranopterin_phosphate"/>
    <property type="match status" value="1"/>
</dbReference>
<dbReference type="SFLD" id="SFLDG01072">
    <property type="entry name" value="dehydrogenase_like"/>
    <property type="match status" value="1"/>
</dbReference>
<dbReference type="SMART" id="SM00729">
    <property type="entry name" value="Elp3"/>
    <property type="match status" value="1"/>
</dbReference>
<dbReference type="SUPFAM" id="SSF102114">
    <property type="entry name" value="Radical SAM enzymes"/>
    <property type="match status" value="1"/>
</dbReference>
<dbReference type="PROSITE" id="PS01305">
    <property type="entry name" value="MOAA_NIFB_PQQE"/>
    <property type="match status" value="1"/>
</dbReference>
<dbReference type="PROSITE" id="PS51918">
    <property type="entry name" value="RADICAL_SAM"/>
    <property type="match status" value="1"/>
</dbReference>
<comment type="function">
    <text evidence="1">Catalyzes the cyclization of GTP to (8S)-3',8-cyclo-7,8-dihydroguanosine 5'-triphosphate.</text>
</comment>
<comment type="catalytic activity">
    <reaction evidence="1">
        <text>GTP + AH2 + S-adenosyl-L-methionine = (8S)-3',8-cyclo-7,8-dihydroguanosine 5'-triphosphate + 5'-deoxyadenosine + L-methionine + A + H(+)</text>
        <dbReference type="Rhea" id="RHEA:49576"/>
        <dbReference type="ChEBI" id="CHEBI:13193"/>
        <dbReference type="ChEBI" id="CHEBI:15378"/>
        <dbReference type="ChEBI" id="CHEBI:17319"/>
        <dbReference type="ChEBI" id="CHEBI:17499"/>
        <dbReference type="ChEBI" id="CHEBI:37565"/>
        <dbReference type="ChEBI" id="CHEBI:57844"/>
        <dbReference type="ChEBI" id="CHEBI:59789"/>
        <dbReference type="ChEBI" id="CHEBI:131766"/>
        <dbReference type="EC" id="4.1.99.22"/>
    </reaction>
</comment>
<comment type="cofactor">
    <cofactor evidence="1">
        <name>[4Fe-4S] cluster</name>
        <dbReference type="ChEBI" id="CHEBI:49883"/>
    </cofactor>
    <text evidence="1">Binds 2 [4Fe-4S] clusters. Binds 1 [4Fe-4S] cluster coordinated with 3 cysteines and an exchangeable S-adenosyl-L-methionine and 1 [4Fe-4S] cluster coordinated with 3 cysteines and the GTP-derived substrate.</text>
</comment>
<comment type="pathway">
    <text evidence="1">Cofactor biosynthesis; molybdopterin biosynthesis.</text>
</comment>
<comment type="subunit">
    <text evidence="1">Monomer and homodimer.</text>
</comment>
<comment type="similarity">
    <text evidence="1">Belongs to the radical SAM superfamily. MoaA family.</text>
</comment>
<accession>A8MLW5</accession>
<protein>
    <recommendedName>
        <fullName evidence="1">GTP 3',8-cyclase</fullName>
        <ecNumber evidence="1">4.1.99.22</ecNumber>
    </recommendedName>
    <alternativeName>
        <fullName evidence="1">Molybdenum cofactor biosynthesis protein A</fullName>
    </alternativeName>
</protein>
<evidence type="ECO:0000255" key="1">
    <source>
        <dbReference type="HAMAP-Rule" id="MF_01225"/>
    </source>
</evidence>
<evidence type="ECO:0000255" key="2">
    <source>
        <dbReference type="PROSITE-ProRule" id="PRU01266"/>
    </source>
</evidence>
<evidence type="ECO:0000256" key="3">
    <source>
        <dbReference type="SAM" id="MobiDB-lite"/>
    </source>
</evidence>
<name>MOAA_ALKOO</name>